<evidence type="ECO:0000255" key="1">
    <source>
        <dbReference type="PROSITE-ProRule" id="PRU00116"/>
    </source>
</evidence>
<reference key="1">
    <citation type="journal article" date="2004" name="Nat. Genet.">
        <title>Complete sequencing and characterization of 21,243 full-length human cDNAs.</title>
        <authorList>
            <person name="Ota T."/>
            <person name="Suzuki Y."/>
            <person name="Nishikawa T."/>
            <person name="Otsuki T."/>
            <person name="Sugiyama T."/>
            <person name="Irie R."/>
            <person name="Wakamatsu A."/>
            <person name="Hayashi K."/>
            <person name="Sato H."/>
            <person name="Nagai K."/>
            <person name="Kimura K."/>
            <person name="Makita H."/>
            <person name="Sekine M."/>
            <person name="Obayashi M."/>
            <person name="Nishi T."/>
            <person name="Shibahara T."/>
            <person name="Tanaka T."/>
            <person name="Ishii S."/>
            <person name="Yamamoto J."/>
            <person name="Saito K."/>
            <person name="Kawai Y."/>
            <person name="Isono Y."/>
            <person name="Nakamura Y."/>
            <person name="Nagahari K."/>
            <person name="Murakami K."/>
            <person name="Yasuda T."/>
            <person name="Iwayanagi T."/>
            <person name="Wagatsuma M."/>
            <person name="Shiratori A."/>
            <person name="Sudo H."/>
            <person name="Hosoiri T."/>
            <person name="Kaku Y."/>
            <person name="Kodaira H."/>
            <person name="Kondo H."/>
            <person name="Sugawara M."/>
            <person name="Takahashi M."/>
            <person name="Kanda K."/>
            <person name="Yokoi T."/>
            <person name="Furuya T."/>
            <person name="Kikkawa E."/>
            <person name="Omura Y."/>
            <person name="Abe K."/>
            <person name="Kamihara K."/>
            <person name="Katsuta N."/>
            <person name="Sato K."/>
            <person name="Tanikawa M."/>
            <person name="Yamazaki M."/>
            <person name="Ninomiya K."/>
            <person name="Ishibashi T."/>
            <person name="Yamashita H."/>
            <person name="Murakawa K."/>
            <person name="Fujimori K."/>
            <person name="Tanai H."/>
            <person name="Kimata M."/>
            <person name="Watanabe M."/>
            <person name="Hiraoka S."/>
            <person name="Chiba Y."/>
            <person name="Ishida S."/>
            <person name="Ono Y."/>
            <person name="Takiguchi S."/>
            <person name="Watanabe S."/>
            <person name="Yosida M."/>
            <person name="Hotuta T."/>
            <person name="Kusano J."/>
            <person name="Kanehori K."/>
            <person name="Takahashi-Fujii A."/>
            <person name="Hara H."/>
            <person name="Tanase T.-O."/>
            <person name="Nomura Y."/>
            <person name="Togiya S."/>
            <person name="Komai F."/>
            <person name="Hara R."/>
            <person name="Takeuchi K."/>
            <person name="Arita M."/>
            <person name="Imose N."/>
            <person name="Musashino K."/>
            <person name="Yuuki H."/>
            <person name="Oshima A."/>
            <person name="Sasaki N."/>
            <person name="Aotsuka S."/>
            <person name="Yoshikawa Y."/>
            <person name="Matsunawa H."/>
            <person name="Ichihara T."/>
            <person name="Shiohata N."/>
            <person name="Sano S."/>
            <person name="Moriya S."/>
            <person name="Momiyama H."/>
            <person name="Satoh N."/>
            <person name="Takami S."/>
            <person name="Terashima Y."/>
            <person name="Suzuki O."/>
            <person name="Nakagawa S."/>
            <person name="Senoh A."/>
            <person name="Mizoguchi H."/>
            <person name="Goto Y."/>
            <person name="Shimizu F."/>
            <person name="Wakebe H."/>
            <person name="Hishigaki H."/>
            <person name="Watanabe T."/>
            <person name="Sugiyama A."/>
            <person name="Takemoto M."/>
            <person name="Kawakami B."/>
            <person name="Yamazaki M."/>
            <person name="Watanabe K."/>
            <person name="Kumagai A."/>
            <person name="Itakura S."/>
            <person name="Fukuzumi Y."/>
            <person name="Fujimori Y."/>
            <person name="Komiyama M."/>
            <person name="Tashiro H."/>
            <person name="Tanigami A."/>
            <person name="Fujiwara T."/>
            <person name="Ono T."/>
            <person name="Yamada K."/>
            <person name="Fujii Y."/>
            <person name="Ozaki K."/>
            <person name="Hirao M."/>
            <person name="Ohmori Y."/>
            <person name="Kawabata A."/>
            <person name="Hikiji T."/>
            <person name="Kobatake N."/>
            <person name="Inagaki H."/>
            <person name="Ikema Y."/>
            <person name="Okamoto S."/>
            <person name="Okitani R."/>
            <person name="Kawakami T."/>
            <person name="Noguchi S."/>
            <person name="Itoh T."/>
            <person name="Shigeta K."/>
            <person name="Senba T."/>
            <person name="Matsumura K."/>
            <person name="Nakajima Y."/>
            <person name="Mizuno T."/>
            <person name="Morinaga M."/>
            <person name="Sasaki M."/>
            <person name="Togashi T."/>
            <person name="Oyama M."/>
            <person name="Hata H."/>
            <person name="Watanabe M."/>
            <person name="Komatsu T."/>
            <person name="Mizushima-Sugano J."/>
            <person name="Satoh T."/>
            <person name="Shirai Y."/>
            <person name="Takahashi Y."/>
            <person name="Nakagawa K."/>
            <person name="Okumura K."/>
            <person name="Nagase T."/>
            <person name="Nomura N."/>
            <person name="Kikuchi H."/>
            <person name="Masuho Y."/>
            <person name="Yamashita R."/>
            <person name="Nakai K."/>
            <person name="Yada T."/>
            <person name="Nakamura Y."/>
            <person name="Ohara O."/>
            <person name="Isogai T."/>
            <person name="Sugano S."/>
        </authorList>
    </citation>
    <scope>NUCLEOTIDE SEQUENCE [LARGE SCALE MRNA]</scope>
    <source>
        <tissue>Testis</tissue>
    </source>
</reference>
<reference key="2">
    <citation type="journal article" date="2006" name="Nature">
        <title>The DNA sequence, annotation and analysis of human chromosome 3.</title>
        <authorList>
            <person name="Muzny D.M."/>
            <person name="Scherer S.E."/>
            <person name="Kaul R."/>
            <person name="Wang J."/>
            <person name="Yu J."/>
            <person name="Sudbrak R."/>
            <person name="Buhay C.J."/>
            <person name="Chen R."/>
            <person name="Cree A."/>
            <person name="Ding Y."/>
            <person name="Dugan-Rocha S."/>
            <person name="Gill R."/>
            <person name="Gunaratne P."/>
            <person name="Harris R.A."/>
            <person name="Hawes A.C."/>
            <person name="Hernandez J."/>
            <person name="Hodgson A.V."/>
            <person name="Hume J."/>
            <person name="Jackson A."/>
            <person name="Khan Z.M."/>
            <person name="Kovar-Smith C."/>
            <person name="Lewis L.R."/>
            <person name="Lozado R.J."/>
            <person name="Metzker M.L."/>
            <person name="Milosavljevic A."/>
            <person name="Miner G.R."/>
            <person name="Morgan M.B."/>
            <person name="Nazareth L.V."/>
            <person name="Scott G."/>
            <person name="Sodergren E."/>
            <person name="Song X.-Z."/>
            <person name="Steffen D."/>
            <person name="Wei S."/>
            <person name="Wheeler D.A."/>
            <person name="Wright M.W."/>
            <person name="Worley K.C."/>
            <person name="Yuan Y."/>
            <person name="Zhang Z."/>
            <person name="Adams C.Q."/>
            <person name="Ansari-Lari M.A."/>
            <person name="Ayele M."/>
            <person name="Brown M.J."/>
            <person name="Chen G."/>
            <person name="Chen Z."/>
            <person name="Clendenning J."/>
            <person name="Clerc-Blankenburg K.P."/>
            <person name="Chen R."/>
            <person name="Chen Z."/>
            <person name="Davis C."/>
            <person name="Delgado O."/>
            <person name="Dinh H.H."/>
            <person name="Dong W."/>
            <person name="Draper H."/>
            <person name="Ernst S."/>
            <person name="Fu G."/>
            <person name="Gonzalez-Garay M.L."/>
            <person name="Garcia D.K."/>
            <person name="Gillett W."/>
            <person name="Gu J."/>
            <person name="Hao B."/>
            <person name="Haugen E."/>
            <person name="Havlak P."/>
            <person name="He X."/>
            <person name="Hennig S."/>
            <person name="Hu S."/>
            <person name="Huang W."/>
            <person name="Jackson L.R."/>
            <person name="Jacob L.S."/>
            <person name="Kelly S.H."/>
            <person name="Kube M."/>
            <person name="Levy R."/>
            <person name="Li Z."/>
            <person name="Liu B."/>
            <person name="Liu J."/>
            <person name="Liu W."/>
            <person name="Lu J."/>
            <person name="Maheshwari M."/>
            <person name="Nguyen B.-V."/>
            <person name="Okwuonu G.O."/>
            <person name="Palmeiri A."/>
            <person name="Pasternak S."/>
            <person name="Perez L.M."/>
            <person name="Phelps K.A."/>
            <person name="Plopper F.J."/>
            <person name="Qiang B."/>
            <person name="Raymond C."/>
            <person name="Rodriguez R."/>
            <person name="Saenphimmachak C."/>
            <person name="Santibanez J."/>
            <person name="Shen H."/>
            <person name="Shen Y."/>
            <person name="Subramanian S."/>
            <person name="Tabor P.E."/>
            <person name="Verduzco D."/>
            <person name="Waldron L."/>
            <person name="Wang J."/>
            <person name="Wang J."/>
            <person name="Wang Q."/>
            <person name="Williams G.A."/>
            <person name="Wong G.K.-S."/>
            <person name="Yao Z."/>
            <person name="Zhang J."/>
            <person name="Zhang X."/>
            <person name="Zhao G."/>
            <person name="Zhou J."/>
            <person name="Zhou Y."/>
            <person name="Nelson D."/>
            <person name="Lehrach H."/>
            <person name="Reinhardt R."/>
            <person name="Naylor S.L."/>
            <person name="Yang H."/>
            <person name="Olson M."/>
            <person name="Weinstock G."/>
            <person name="Gibbs R.A."/>
        </authorList>
    </citation>
    <scope>NUCLEOTIDE SEQUENCE [LARGE SCALE GENOMIC DNA]</scope>
</reference>
<reference key="3">
    <citation type="submission" date="2005-07" db="EMBL/GenBank/DDBJ databases">
        <authorList>
            <person name="Mural R.J."/>
            <person name="Istrail S."/>
            <person name="Sutton G."/>
            <person name="Florea L."/>
            <person name="Halpern A.L."/>
            <person name="Mobarry C.M."/>
            <person name="Lippert R."/>
            <person name="Walenz B."/>
            <person name="Shatkay H."/>
            <person name="Dew I."/>
            <person name="Miller J.R."/>
            <person name="Flanigan M.J."/>
            <person name="Edwards N.J."/>
            <person name="Bolanos R."/>
            <person name="Fasulo D."/>
            <person name="Halldorsson B.V."/>
            <person name="Hannenhalli S."/>
            <person name="Turner R."/>
            <person name="Yooseph S."/>
            <person name="Lu F."/>
            <person name="Nusskern D.R."/>
            <person name="Shue B.C."/>
            <person name="Zheng X.H."/>
            <person name="Zhong F."/>
            <person name="Delcher A.L."/>
            <person name="Huson D.H."/>
            <person name="Kravitz S.A."/>
            <person name="Mouchard L."/>
            <person name="Reinert K."/>
            <person name="Remington K.A."/>
            <person name="Clark A.G."/>
            <person name="Waterman M.S."/>
            <person name="Eichler E.E."/>
            <person name="Adams M.D."/>
            <person name="Hunkapiller M.W."/>
            <person name="Myers E.W."/>
            <person name="Venter J.C."/>
        </authorList>
    </citation>
    <scope>NUCLEOTIDE SEQUENCE [LARGE SCALE GENOMIC DNA]</scope>
</reference>
<reference key="4">
    <citation type="journal article" date="2004" name="Genome Res.">
        <title>The status, quality, and expansion of the NIH full-length cDNA project: the Mammalian Gene Collection (MGC).</title>
        <authorList>
            <consortium name="The MGC Project Team"/>
        </authorList>
    </citation>
    <scope>NUCLEOTIDE SEQUENCE [LARGE SCALE MRNA]</scope>
    <source>
        <tissue>Brain</tissue>
    </source>
</reference>
<sequence>MGSKCCKGGPDEDAVERQRRQKLLLAQLHHRKRVKAAGQIQAWWRGVLVRRTLLVAALRAWMIQCWWRTLVQRRIRQRRQALLRVYVIQEQATVKLQSCIRMWQCRQCYRQMCNALCLFQVPESSLAFQTDGFLQVQYAIPSKQPEFHIEILSI</sequence>
<protein>
    <recommendedName>
        <fullName>IQ domain-containing protein F3</fullName>
    </recommendedName>
</protein>
<proteinExistence type="evidence at protein level"/>
<keyword id="KW-1267">Proteomics identification</keyword>
<keyword id="KW-1185">Reference proteome</keyword>
<feature type="chain" id="PRO_0000339381" description="IQ domain-containing protein F3">
    <location>
        <begin position="1"/>
        <end position="154"/>
    </location>
</feature>
<feature type="domain" description="IQ" evidence="1">
    <location>
        <begin position="89"/>
        <end position="118"/>
    </location>
</feature>
<gene>
    <name type="primary">IQCF3</name>
</gene>
<dbReference type="EMBL" id="AK057432">
    <property type="status" value="NOT_ANNOTATED_CDS"/>
    <property type="molecule type" value="mRNA"/>
</dbReference>
<dbReference type="EMBL" id="AC097636">
    <property type="status" value="NOT_ANNOTATED_CDS"/>
    <property type="molecule type" value="Genomic_DNA"/>
</dbReference>
<dbReference type="EMBL" id="CH471055">
    <property type="protein sequence ID" value="EAW65154.1"/>
    <property type="molecule type" value="Genomic_DNA"/>
</dbReference>
<dbReference type="EMBL" id="BC146874">
    <property type="protein sequence ID" value="AAI46875.1"/>
    <property type="molecule type" value="mRNA"/>
</dbReference>
<dbReference type="EMBL" id="BC146889">
    <property type="protein sequence ID" value="AAI46890.1"/>
    <property type="molecule type" value="mRNA"/>
</dbReference>
<dbReference type="EMBL" id="BC171811">
    <property type="protein sequence ID" value="AAI71811.1"/>
    <property type="molecule type" value="mRNA"/>
</dbReference>
<dbReference type="EMBL" id="BC171818">
    <property type="protein sequence ID" value="AAI71818.1"/>
    <property type="molecule type" value="mRNA"/>
</dbReference>
<dbReference type="CCDS" id="CCDS46837.1"/>
<dbReference type="RefSeq" id="NP_001078948.1">
    <property type="nucleotide sequence ID" value="NM_001085479.3"/>
</dbReference>
<dbReference type="RefSeq" id="NP_001193952.1">
    <property type="nucleotide sequence ID" value="NM_001207023.2"/>
</dbReference>
<dbReference type="RefSeq" id="NP_001380816.1">
    <property type="nucleotide sequence ID" value="NM_001393887.1"/>
</dbReference>
<dbReference type="SMR" id="P0C7M6"/>
<dbReference type="BioGRID" id="134902">
    <property type="interactions" value="13"/>
</dbReference>
<dbReference type="IntAct" id="P0C7M6">
    <property type="interactions" value="1"/>
</dbReference>
<dbReference type="STRING" id="9606.ENSP00000409373"/>
<dbReference type="iPTMnet" id="P0C7M6"/>
<dbReference type="PhosphoSitePlus" id="P0C7M6"/>
<dbReference type="BioMuta" id="IQCF3"/>
<dbReference type="DMDM" id="190359730"/>
<dbReference type="MassIVE" id="P0C7M6"/>
<dbReference type="PaxDb" id="9606-ENSP00000415609"/>
<dbReference type="PeptideAtlas" id="P0C7M6"/>
<dbReference type="ProteomicsDB" id="52345"/>
<dbReference type="DNASU" id="401067"/>
<dbReference type="Ensembl" id="ENST00000437810.7">
    <property type="protein sequence ID" value="ENSP00000409373.2"/>
    <property type="gene ID" value="ENSG00000229972.10"/>
</dbReference>
<dbReference type="Ensembl" id="ENST00000440739.4">
    <property type="protein sequence ID" value="ENSP00000402012.2"/>
    <property type="gene ID" value="ENSG00000229972.10"/>
</dbReference>
<dbReference type="Ensembl" id="ENST00000446775.5">
    <property type="protein sequence ID" value="ENSP00000401767.1"/>
    <property type="gene ID" value="ENSG00000229972.10"/>
</dbReference>
<dbReference type="GeneID" id="401067"/>
<dbReference type="KEGG" id="hsa:401067"/>
<dbReference type="MANE-Select" id="ENST00000440739.4">
    <property type="protein sequence ID" value="ENSP00000402012.2"/>
    <property type="RefSeq nucleotide sequence ID" value="NM_001393887.1"/>
    <property type="RefSeq protein sequence ID" value="NP_001380816.1"/>
</dbReference>
<dbReference type="UCSC" id="uc021wyy.2">
    <property type="organism name" value="human"/>
</dbReference>
<dbReference type="AGR" id="HGNC:31816"/>
<dbReference type="CTD" id="401067"/>
<dbReference type="DisGeNET" id="401067"/>
<dbReference type="GeneCards" id="IQCF3"/>
<dbReference type="HGNC" id="HGNC:31816">
    <property type="gene designation" value="IQCF3"/>
</dbReference>
<dbReference type="HPA" id="ENSG00000229972">
    <property type="expression patterns" value="Tissue enriched (testis)"/>
</dbReference>
<dbReference type="neXtProt" id="NX_P0C7M6"/>
<dbReference type="OpenTargets" id="ENSG00000229972"/>
<dbReference type="PharmGKB" id="PA134884625"/>
<dbReference type="VEuPathDB" id="HostDB:ENSG00000229972"/>
<dbReference type="eggNOG" id="ENOG502T3TE">
    <property type="taxonomic scope" value="Eukaryota"/>
</dbReference>
<dbReference type="GeneTree" id="ENSGT00390000004641"/>
<dbReference type="HOGENOM" id="CLU_114989_2_0_1"/>
<dbReference type="InParanoid" id="P0C7M6"/>
<dbReference type="OMA" id="WQCHRRY"/>
<dbReference type="OrthoDB" id="9837193at2759"/>
<dbReference type="PAN-GO" id="P0C7M6">
    <property type="GO annotations" value="1 GO annotation based on evolutionary models"/>
</dbReference>
<dbReference type="PhylomeDB" id="P0C7M6"/>
<dbReference type="TreeFam" id="TF337908"/>
<dbReference type="PathwayCommons" id="P0C7M6"/>
<dbReference type="SignaLink" id="P0C7M6"/>
<dbReference type="BioGRID-ORCS" id="401067">
    <property type="hits" value="12 hits in 1138 CRISPR screens"/>
</dbReference>
<dbReference type="GenomeRNAi" id="401067"/>
<dbReference type="Pharos" id="P0C7M6">
    <property type="development level" value="Tdark"/>
</dbReference>
<dbReference type="PRO" id="PR:P0C7M6"/>
<dbReference type="Proteomes" id="UP000005640">
    <property type="component" value="Chromosome 3"/>
</dbReference>
<dbReference type="RNAct" id="P0C7M6">
    <property type="molecule type" value="protein"/>
</dbReference>
<dbReference type="Bgee" id="ENSG00000229972">
    <property type="expression patterns" value="Expressed in left testis and 66 other cell types or tissues"/>
</dbReference>
<dbReference type="ExpressionAtlas" id="P0C7M6">
    <property type="expression patterns" value="baseline and differential"/>
</dbReference>
<dbReference type="GO" id="GO:0005516">
    <property type="term" value="F:calmodulin binding"/>
    <property type="evidence" value="ECO:0000318"/>
    <property type="project" value="GO_Central"/>
</dbReference>
<dbReference type="Gene3D" id="1.20.5.190">
    <property type="match status" value="1"/>
</dbReference>
<dbReference type="InterPro" id="IPR000048">
    <property type="entry name" value="IQ_motif_EF-hand-BS"/>
</dbReference>
<dbReference type="InterPro" id="IPR039887">
    <property type="entry name" value="IQCF"/>
</dbReference>
<dbReference type="PANTHER" id="PTHR21633:SF5">
    <property type="entry name" value="IQ DOMAIN-CONTAINING PROTEIN F3"/>
    <property type="match status" value="1"/>
</dbReference>
<dbReference type="PANTHER" id="PTHR21633">
    <property type="entry name" value="IQ MOTIF CONTAINING F"/>
    <property type="match status" value="1"/>
</dbReference>
<dbReference type="Pfam" id="PF00612">
    <property type="entry name" value="IQ"/>
    <property type="match status" value="2"/>
</dbReference>
<dbReference type="SMART" id="SM00015">
    <property type="entry name" value="IQ"/>
    <property type="match status" value="2"/>
</dbReference>
<dbReference type="PROSITE" id="PS50096">
    <property type="entry name" value="IQ"/>
    <property type="match status" value="1"/>
</dbReference>
<name>IQCF3_HUMAN</name>
<comment type="interaction">
    <interactant intactId="EBI-11953784">
        <id>P0C7M6</id>
    </interactant>
    <interactant intactId="EBI-947187">
        <id>Q9UHD9</id>
        <label>UBQLN2</label>
    </interactant>
    <organismsDiffer>false</organismsDiffer>
    <experiments>3</experiments>
</comment>
<accession>P0C7M6</accession>
<accession>B2RUV0</accession>
<organism>
    <name type="scientific">Homo sapiens</name>
    <name type="common">Human</name>
    <dbReference type="NCBI Taxonomy" id="9606"/>
    <lineage>
        <taxon>Eukaryota</taxon>
        <taxon>Metazoa</taxon>
        <taxon>Chordata</taxon>
        <taxon>Craniata</taxon>
        <taxon>Vertebrata</taxon>
        <taxon>Euteleostomi</taxon>
        <taxon>Mammalia</taxon>
        <taxon>Eutheria</taxon>
        <taxon>Euarchontoglires</taxon>
        <taxon>Primates</taxon>
        <taxon>Haplorrhini</taxon>
        <taxon>Catarrhini</taxon>
        <taxon>Hominidae</taxon>
        <taxon>Homo</taxon>
    </lineage>
</organism>